<comment type="function">
    <text evidence="1">Part of the ABC transporter complex ZnuABC involved in zinc import. Responsible for energy coupling to the transport system.</text>
</comment>
<comment type="catalytic activity">
    <reaction evidence="1">
        <text>Zn(2+)(out) + ATP(in) + H2O(in) = Zn(2+)(in) + ADP(in) + phosphate(in) + H(+)(in)</text>
        <dbReference type="Rhea" id="RHEA:29795"/>
        <dbReference type="ChEBI" id="CHEBI:15377"/>
        <dbReference type="ChEBI" id="CHEBI:15378"/>
        <dbReference type="ChEBI" id="CHEBI:29105"/>
        <dbReference type="ChEBI" id="CHEBI:30616"/>
        <dbReference type="ChEBI" id="CHEBI:43474"/>
        <dbReference type="ChEBI" id="CHEBI:456216"/>
        <dbReference type="EC" id="7.2.2.20"/>
    </reaction>
</comment>
<comment type="subunit">
    <text evidence="1">The complex is composed of two ATP-binding proteins (ZnuC), two transmembrane proteins (ZnuB) and a solute-binding protein (ZnuA).</text>
</comment>
<comment type="subcellular location">
    <subcellularLocation>
        <location evidence="1">Cell inner membrane</location>
        <topology evidence="1">Peripheral membrane protein</topology>
    </subcellularLocation>
</comment>
<comment type="similarity">
    <text evidence="1">Belongs to the ABC transporter superfamily. Zinc importer (TC 3.A.1.15.5) family.</text>
</comment>
<comment type="sequence caution" evidence="2">
    <conflict type="erroneous initiation">
        <sequence resource="EMBL-CDS" id="AAX65806"/>
    </conflict>
</comment>
<organism>
    <name type="scientific">Salmonella choleraesuis (strain SC-B67)</name>
    <dbReference type="NCBI Taxonomy" id="321314"/>
    <lineage>
        <taxon>Bacteria</taxon>
        <taxon>Pseudomonadati</taxon>
        <taxon>Pseudomonadota</taxon>
        <taxon>Gammaproteobacteria</taxon>
        <taxon>Enterobacterales</taxon>
        <taxon>Enterobacteriaceae</taxon>
        <taxon>Salmonella</taxon>
    </lineage>
</organism>
<gene>
    <name evidence="1" type="primary">znuC</name>
    <name type="ordered locus">SCH_1900</name>
</gene>
<sequence length="251" mass="27685">MTSLVSLENVSVSFGQRRVLSDVSLELSPGKILTLLGPNGAGKSTLVRVVLGLVAPDEGVIKRNGQLRIGYVPQKLYLDTTLPLTVNRFLRLRPGTQKTDILPALKRVQAGHLIDAPMQKLSGGETQRVLLARALLNRPQLLVLDEPTQGVDVNGQVALYDLIDQLRRELDCAVLMVSHDLHLVMAKTDEVLCLNHHICCSGAPEVVSMHPEFISMFGPRGAEQLGIYRHHHNHRHDLQGRIVLRRGNGHS</sequence>
<proteinExistence type="inferred from homology"/>
<evidence type="ECO:0000255" key="1">
    <source>
        <dbReference type="HAMAP-Rule" id="MF_01725"/>
    </source>
</evidence>
<evidence type="ECO:0000305" key="2"/>
<reference key="1">
    <citation type="journal article" date="2005" name="Nucleic Acids Res.">
        <title>The genome sequence of Salmonella enterica serovar Choleraesuis, a highly invasive and resistant zoonotic pathogen.</title>
        <authorList>
            <person name="Chiu C.-H."/>
            <person name="Tang P."/>
            <person name="Chu C."/>
            <person name="Hu S."/>
            <person name="Bao Q."/>
            <person name="Yu J."/>
            <person name="Chou Y.-Y."/>
            <person name="Wang H.-S."/>
            <person name="Lee Y.-S."/>
        </authorList>
    </citation>
    <scope>NUCLEOTIDE SEQUENCE [LARGE SCALE GENOMIC DNA]</scope>
    <source>
        <strain>SC-B67</strain>
    </source>
</reference>
<keyword id="KW-0067">ATP-binding</keyword>
<keyword id="KW-0997">Cell inner membrane</keyword>
<keyword id="KW-1003">Cell membrane</keyword>
<keyword id="KW-0406">Ion transport</keyword>
<keyword id="KW-0472">Membrane</keyword>
<keyword id="KW-0547">Nucleotide-binding</keyword>
<keyword id="KW-1278">Translocase</keyword>
<keyword id="KW-0813">Transport</keyword>
<keyword id="KW-0862">Zinc</keyword>
<keyword id="KW-0864">Zinc transport</keyword>
<dbReference type="EC" id="7.2.2.20" evidence="1"/>
<dbReference type="EMBL" id="AE017220">
    <property type="protein sequence ID" value="AAX65806.1"/>
    <property type="status" value="ALT_INIT"/>
    <property type="molecule type" value="Genomic_DNA"/>
</dbReference>
<dbReference type="RefSeq" id="WP_000203023.1">
    <property type="nucleotide sequence ID" value="NC_006905.1"/>
</dbReference>
<dbReference type="SMR" id="Q57NA5"/>
<dbReference type="KEGG" id="sec:SCH_1900"/>
<dbReference type="HOGENOM" id="CLU_000604_1_11_6"/>
<dbReference type="Proteomes" id="UP000000538">
    <property type="component" value="Chromosome"/>
</dbReference>
<dbReference type="GO" id="GO:0005886">
    <property type="term" value="C:plasma membrane"/>
    <property type="evidence" value="ECO:0007669"/>
    <property type="project" value="UniProtKB-SubCell"/>
</dbReference>
<dbReference type="GO" id="GO:0015633">
    <property type="term" value="F:ABC-type zinc transporter activity"/>
    <property type="evidence" value="ECO:0007669"/>
    <property type="project" value="UniProtKB-EC"/>
</dbReference>
<dbReference type="GO" id="GO:0005524">
    <property type="term" value="F:ATP binding"/>
    <property type="evidence" value="ECO:0007669"/>
    <property type="project" value="UniProtKB-KW"/>
</dbReference>
<dbReference type="GO" id="GO:0016887">
    <property type="term" value="F:ATP hydrolysis activity"/>
    <property type="evidence" value="ECO:0007669"/>
    <property type="project" value="InterPro"/>
</dbReference>
<dbReference type="GO" id="GO:0010043">
    <property type="term" value="P:response to zinc ion"/>
    <property type="evidence" value="ECO:0007669"/>
    <property type="project" value="TreeGrafter"/>
</dbReference>
<dbReference type="CDD" id="cd03235">
    <property type="entry name" value="ABC_Metallic_Cations"/>
    <property type="match status" value="1"/>
</dbReference>
<dbReference type="FunFam" id="3.40.50.300:FF:000392">
    <property type="entry name" value="Zinc import ATP-binding protein ZnuC"/>
    <property type="match status" value="1"/>
</dbReference>
<dbReference type="Gene3D" id="3.40.50.300">
    <property type="entry name" value="P-loop containing nucleotide triphosphate hydrolases"/>
    <property type="match status" value="1"/>
</dbReference>
<dbReference type="InterPro" id="IPR003593">
    <property type="entry name" value="AAA+_ATPase"/>
</dbReference>
<dbReference type="InterPro" id="IPR003439">
    <property type="entry name" value="ABC_transporter-like_ATP-bd"/>
</dbReference>
<dbReference type="InterPro" id="IPR050153">
    <property type="entry name" value="Metal_Ion_Import_ABC"/>
</dbReference>
<dbReference type="InterPro" id="IPR027417">
    <property type="entry name" value="P-loop_NTPase"/>
</dbReference>
<dbReference type="NCBIfam" id="NF007090">
    <property type="entry name" value="PRK09544.1"/>
    <property type="match status" value="1"/>
</dbReference>
<dbReference type="PANTHER" id="PTHR42734">
    <property type="entry name" value="METAL TRANSPORT SYSTEM ATP-BINDING PROTEIN TM_0124-RELATED"/>
    <property type="match status" value="1"/>
</dbReference>
<dbReference type="PANTHER" id="PTHR42734:SF9">
    <property type="entry name" value="ZINC IMPORT ATP-BINDING PROTEIN ZNUC"/>
    <property type="match status" value="1"/>
</dbReference>
<dbReference type="Pfam" id="PF00005">
    <property type="entry name" value="ABC_tran"/>
    <property type="match status" value="1"/>
</dbReference>
<dbReference type="SMART" id="SM00382">
    <property type="entry name" value="AAA"/>
    <property type="match status" value="1"/>
</dbReference>
<dbReference type="SUPFAM" id="SSF52540">
    <property type="entry name" value="P-loop containing nucleoside triphosphate hydrolases"/>
    <property type="match status" value="1"/>
</dbReference>
<dbReference type="PROSITE" id="PS50893">
    <property type="entry name" value="ABC_TRANSPORTER_2"/>
    <property type="match status" value="1"/>
</dbReference>
<dbReference type="PROSITE" id="PS51298">
    <property type="entry name" value="ZNUC"/>
    <property type="match status" value="1"/>
</dbReference>
<protein>
    <recommendedName>
        <fullName evidence="1">Zinc import ATP-binding protein ZnuC</fullName>
        <ecNumber evidence="1">7.2.2.20</ecNumber>
    </recommendedName>
</protein>
<name>ZNUC_SALCH</name>
<feature type="chain" id="PRO_0000281546" description="Zinc import ATP-binding protein ZnuC">
    <location>
        <begin position="1"/>
        <end position="251"/>
    </location>
</feature>
<feature type="domain" description="ABC transporter" evidence="1">
    <location>
        <begin position="5"/>
        <end position="220"/>
    </location>
</feature>
<feature type="binding site" evidence="1">
    <location>
        <begin position="37"/>
        <end position="44"/>
    </location>
    <ligand>
        <name>ATP</name>
        <dbReference type="ChEBI" id="CHEBI:30616"/>
    </ligand>
</feature>
<accession>Q57NA5</accession>